<reference key="1">
    <citation type="journal article" date="2015" name="PLoS Genet.">
        <title>The dynamic genome and transcriptome of the human fungal pathogen Blastomyces and close relative Emmonsia.</title>
        <authorList>
            <person name="Munoz J.F."/>
            <person name="Gauthier G.M."/>
            <person name="Desjardins C.A."/>
            <person name="Gallo J.E."/>
            <person name="Holder J."/>
            <person name="Sullivan T.D."/>
            <person name="Marty A.J."/>
            <person name="Carmen J.C."/>
            <person name="Chen Z."/>
            <person name="Ding L."/>
            <person name="Gujja S."/>
            <person name="Magrini V."/>
            <person name="Misas E."/>
            <person name="Mitreva M."/>
            <person name="Priest M."/>
            <person name="Saif S."/>
            <person name="Whiston E.A."/>
            <person name="Young S."/>
            <person name="Zeng Q."/>
            <person name="Goldman W.E."/>
            <person name="Mardis E.R."/>
            <person name="Taylor J.W."/>
            <person name="McEwen J.G."/>
            <person name="Clay O.K."/>
            <person name="Klein B.S."/>
            <person name="Cuomo C.A."/>
        </authorList>
    </citation>
    <scope>NUCLEOTIDE SEQUENCE [LARGE SCALE GENOMIC DNA]</scope>
    <source>
        <strain>ER-3 / ATCC MYA-2586</strain>
    </source>
</reference>
<gene>
    <name type="ORF">BDCG_00922</name>
</gene>
<dbReference type="EC" id="3.4.24.39"/>
<dbReference type="EMBL" id="EQ999973">
    <property type="protein sequence ID" value="EEQ84117.2"/>
    <property type="molecule type" value="Genomic_DNA"/>
</dbReference>
<dbReference type="RefSeq" id="XP_045272162.1">
    <property type="nucleotide sequence ID" value="XM_045416436.1"/>
</dbReference>
<dbReference type="SMR" id="C5G8P3"/>
<dbReference type="STRING" id="559297.C5G8P3"/>
<dbReference type="MEROPS" id="M35.002"/>
<dbReference type="GeneID" id="69023604"/>
<dbReference type="eggNOG" id="ENOG502SGF5">
    <property type="taxonomic scope" value="Eukaryota"/>
</dbReference>
<dbReference type="HOGENOM" id="CLU_039313_1_1_1"/>
<dbReference type="OMA" id="ANCDLYY"/>
<dbReference type="BRENDA" id="3.4.24.39">
    <property type="organism ID" value="14235"/>
</dbReference>
<dbReference type="GO" id="GO:0005576">
    <property type="term" value="C:extracellular region"/>
    <property type="evidence" value="ECO:0007669"/>
    <property type="project" value="UniProtKB-SubCell"/>
</dbReference>
<dbReference type="GO" id="GO:0046872">
    <property type="term" value="F:metal ion binding"/>
    <property type="evidence" value="ECO:0007669"/>
    <property type="project" value="UniProtKB-KW"/>
</dbReference>
<dbReference type="GO" id="GO:0004222">
    <property type="term" value="F:metalloendopeptidase activity"/>
    <property type="evidence" value="ECO:0007669"/>
    <property type="project" value="InterPro"/>
</dbReference>
<dbReference type="GO" id="GO:0006508">
    <property type="term" value="P:proteolysis"/>
    <property type="evidence" value="ECO:0007669"/>
    <property type="project" value="UniProtKB-KW"/>
</dbReference>
<dbReference type="CDD" id="cd11008">
    <property type="entry name" value="M35_deuterolysin_like"/>
    <property type="match status" value="1"/>
</dbReference>
<dbReference type="Gene3D" id="2.60.40.2970">
    <property type="match status" value="1"/>
</dbReference>
<dbReference type="Gene3D" id="3.40.390.10">
    <property type="entry name" value="Collagenase (Catalytic Domain)"/>
    <property type="match status" value="1"/>
</dbReference>
<dbReference type="InterPro" id="IPR050414">
    <property type="entry name" value="Fungal_M35_metalloproteases"/>
</dbReference>
<dbReference type="InterPro" id="IPR024079">
    <property type="entry name" value="MetalloPept_cat_dom_sf"/>
</dbReference>
<dbReference type="InterPro" id="IPR001384">
    <property type="entry name" value="Peptidase_M35"/>
</dbReference>
<dbReference type="PANTHER" id="PTHR37016">
    <property type="match status" value="1"/>
</dbReference>
<dbReference type="PANTHER" id="PTHR37016:SF3">
    <property type="entry name" value="NEUTRAL PROTEASE 2-RELATED"/>
    <property type="match status" value="1"/>
</dbReference>
<dbReference type="Pfam" id="PF02102">
    <property type="entry name" value="Peptidase_M35"/>
    <property type="match status" value="1"/>
</dbReference>
<dbReference type="PRINTS" id="PR00768">
    <property type="entry name" value="DEUTEROLYSIN"/>
</dbReference>
<dbReference type="SUPFAM" id="SSF55486">
    <property type="entry name" value="Metalloproteases ('zincins'), catalytic domain"/>
    <property type="match status" value="1"/>
</dbReference>
<dbReference type="PROSITE" id="PS00142">
    <property type="entry name" value="ZINC_PROTEASE"/>
    <property type="match status" value="1"/>
</dbReference>
<organism>
    <name type="scientific">Ajellomyces dermatitidis (strain ER-3 / ATCC MYA-2586)</name>
    <name type="common">Blastomyces dermatitidis</name>
    <dbReference type="NCBI Taxonomy" id="559297"/>
    <lineage>
        <taxon>Eukaryota</taxon>
        <taxon>Fungi</taxon>
        <taxon>Dikarya</taxon>
        <taxon>Ascomycota</taxon>
        <taxon>Pezizomycotina</taxon>
        <taxon>Eurotiomycetes</taxon>
        <taxon>Eurotiomycetidae</taxon>
        <taxon>Onygenales</taxon>
        <taxon>Ajellomycetaceae</taxon>
        <taxon>Blastomyces</taxon>
    </lineage>
</organism>
<sequence length="357" mass="38217">MRSPQSILAIVAFATTAIAGVVPSTEKRADDIPELDVKLTQVEGTLVKAVVTNNGDEDLNILNLNFFKDTAPVKKVSVYSQGAEVPFAGVRLRHKTSGLSPEVFTYLGPGESFEDEFDVAFTADLSQGGRIVVKAEGFASTTDTDGDTLSGVVHYKSNELEIDVDGKAAAKNFASLNQFSKRTRLTGCTGSRGSAATRAIRDSAPLAAMAAGAARNGGRAFTQYFKTNDQQVRNLVAARFDAVAREASSTTSGRTTYYCDDPYGICSPNVLAYALPSRNIISNCPAYYSLSHLTWRCHGQDRVTTSIHEFTHTPGVFSPGTDDLAYGHQAATSLSTWEALNNADSFSLFANAVYLGC</sequence>
<accession>C5G8P3</accession>
<proteinExistence type="inferred from homology"/>
<name>NPIIA_AJEDR</name>
<protein>
    <recommendedName>
        <fullName>Neutral protease 2 homolog BDCG_00922</fullName>
        <ecNumber>3.4.24.39</ecNumber>
    </recommendedName>
    <alternativeName>
        <fullName>Deuterolysin BDCG_00922</fullName>
    </alternativeName>
</protein>
<keyword id="KW-0165">Cleavage on pair of basic residues</keyword>
<keyword id="KW-1015">Disulfide bond</keyword>
<keyword id="KW-0378">Hydrolase</keyword>
<keyword id="KW-0479">Metal-binding</keyword>
<keyword id="KW-0482">Metalloprotease</keyword>
<keyword id="KW-0645">Protease</keyword>
<keyword id="KW-0964">Secreted</keyword>
<keyword id="KW-0732">Signal</keyword>
<keyword id="KW-0862">Zinc</keyword>
<keyword id="KW-0865">Zymogen</keyword>
<comment type="function">
    <text evidence="1">Secreted metalloproteinase that allows assimilation of proteinaceous substrates. Shows high activities on basic nuclear substrates such as histone and protamine (By similarity).</text>
</comment>
<comment type="catalytic activity">
    <reaction>
        <text>Preferential cleavage of bonds with hydrophobic residues in P1'. Also 3-Asn-|-Gln-4 and 8-Gly-|-Ser-9 bonds in insulin B chain.</text>
        <dbReference type="EC" id="3.4.24.39"/>
    </reaction>
</comment>
<comment type="cofactor">
    <cofactor evidence="1">
        <name>Zn(2+)</name>
        <dbReference type="ChEBI" id="CHEBI:29105"/>
    </cofactor>
    <text evidence="1">Binds 1 zinc ion per subunit.</text>
</comment>
<comment type="subcellular location">
    <subcellularLocation>
        <location evidence="1">Secreted</location>
    </subcellularLocation>
</comment>
<comment type="similarity">
    <text evidence="5">Belongs to the peptidase M35 family.</text>
</comment>
<evidence type="ECO:0000250" key="1"/>
<evidence type="ECO:0000250" key="2">
    <source>
        <dbReference type="UniProtKB" id="P46076"/>
    </source>
</evidence>
<evidence type="ECO:0000255" key="3"/>
<evidence type="ECO:0000255" key="4">
    <source>
        <dbReference type="PROSITE-ProRule" id="PRU10095"/>
    </source>
</evidence>
<evidence type="ECO:0000305" key="5"/>
<feature type="signal peptide" evidence="3">
    <location>
        <begin position="1"/>
        <end position="19"/>
    </location>
</feature>
<feature type="propeptide" id="PRO_0000407080" evidence="2">
    <location>
        <begin position="20"/>
        <end position="182"/>
    </location>
</feature>
<feature type="chain" id="PRO_0000407081" description="Neutral protease 2 homolog BDCG_00922">
    <location>
        <begin position="183"/>
        <end position="357"/>
    </location>
</feature>
<feature type="active site" evidence="4">
    <location>
        <position position="309"/>
    </location>
</feature>
<feature type="binding site" evidence="4">
    <location>
        <position position="308"/>
    </location>
    <ligand>
        <name>Zn(2+)</name>
        <dbReference type="ChEBI" id="CHEBI:29105"/>
        <note>catalytic</note>
    </ligand>
</feature>
<feature type="binding site" evidence="4">
    <location>
        <position position="312"/>
    </location>
    <ligand>
        <name>Zn(2+)</name>
        <dbReference type="ChEBI" id="CHEBI:29105"/>
        <note>catalytic</note>
    </ligand>
</feature>
<feature type="binding site" evidence="4">
    <location>
        <position position="323"/>
    </location>
    <ligand>
        <name>Zn(2+)</name>
        <dbReference type="ChEBI" id="CHEBI:29105"/>
        <note>catalytic</note>
    </ligand>
</feature>
<feature type="disulfide bond" evidence="2">
    <location>
        <begin position="188"/>
        <end position="259"/>
    </location>
</feature>
<feature type="disulfide bond" evidence="2">
    <location>
        <begin position="266"/>
        <end position="284"/>
    </location>
</feature>
<feature type="disulfide bond" evidence="2">
    <location>
        <begin position="297"/>
        <end position="357"/>
    </location>
</feature>